<proteinExistence type="inferred from homology"/>
<dbReference type="EMBL" id="AAAB01008807">
    <property type="protein sequence ID" value="EAA04663.2"/>
    <property type="molecule type" value="Genomic_DNA"/>
</dbReference>
<dbReference type="SMR" id="Q7QJW7"/>
<dbReference type="FunCoup" id="Q7QJW7">
    <property type="interactions" value="1697"/>
</dbReference>
<dbReference type="STRING" id="7165.Q7QJW7"/>
<dbReference type="PaxDb" id="7165-AGAP007701-PA"/>
<dbReference type="EnsemblMetazoa" id="AGAP007701-RA">
    <property type="protein sequence ID" value="AGAP007701-PA"/>
    <property type="gene ID" value="AGAP007701"/>
</dbReference>
<dbReference type="GeneID" id="1269532"/>
<dbReference type="KEGG" id="aga:1269532"/>
<dbReference type="CTD" id="36494"/>
<dbReference type="VEuPathDB" id="VectorBase:AGAMI1_010964"/>
<dbReference type="VEuPathDB" id="VectorBase:AGAP007701"/>
<dbReference type="eggNOG" id="KOG2749">
    <property type="taxonomic scope" value="Eukaryota"/>
</dbReference>
<dbReference type="HOGENOM" id="CLU_018195_1_0_1"/>
<dbReference type="InParanoid" id="Q7QJW7"/>
<dbReference type="OMA" id="VQYVNCH"/>
<dbReference type="PhylomeDB" id="Q7QJW7"/>
<dbReference type="Proteomes" id="UP000007062">
    <property type="component" value="Chromosome 2L"/>
</dbReference>
<dbReference type="GO" id="GO:0005849">
    <property type="term" value="C:mRNA cleavage factor complex"/>
    <property type="evidence" value="ECO:0007669"/>
    <property type="project" value="InterPro"/>
</dbReference>
<dbReference type="GO" id="GO:0005634">
    <property type="term" value="C:nucleus"/>
    <property type="evidence" value="ECO:0000318"/>
    <property type="project" value="GO_Central"/>
</dbReference>
<dbReference type="GO" id="GO:0005524">
    <property type="term" value="F:ATP binding"/>
    <property type="evidence" value="ECO:0007669"/>
    <property type="project" value="UniProtKB-UniRule"/>
</dbReference>
<dbReference type="GO" id="GO:0051731">
    <property type="term" value="F:polynucleotide 5'-hydroxyl-kinase activity"/>
    <property type="evidence" value="ECO:0000318"/>
    <property type="project" value="GO_Central"/>
</dbReference>
<dbReference type="GO" id="GO:0031124">
    <property type="term" value="P:mRNA 3'-end processing"/>
    <property type="evidence" value="ECO:0007669"/>
    <property type="project" value="UniProtKB-UniRule"/>
</dbReference>
<dbReference type="GO" id="GO:0006388">
    <property type="term" value="P:tRNA splicing, via endonucleolytic cleavage and ligation"/>
    <property type="evidence" value="ECO:0000318"/>
    <property type="project" value="GO_Central"/>
</dbReference>
<dbReference type="CDD" id="cd01983">
    <property type="entry name" value="SIMIBI"/>
    <property type="match status" value="1"/>
</dbReference>
<dbReference type="FunFam" id="2.40.30.330:FF:000001">
    <property type="entry name" value="Protein CLP1 homolog"/>
    <property type="match status" value="1"/>
</dbReference>
<dbReference type="FunFam" id="3.40.50.300:FF:000454">
    <property type="entry name" value="Protein CLP1 homolog"/>
    <property type="match status" value="1"/>
</dbReference>
<dbReference type="FunFam" id="2.60.120.1030:FF:000001">
    <property type="entry name" value="Protein CLP1 homolog 5"/>
    <property type="match status" value="1"/>
</dbReference>
<dbReference type="Gene3D" id="2.60.120.1030">
    <property type="entry name" value="Clp1, DNA binding domain"/>
    <property type="match status" value="1"/>
</dbReference>
<dbReference type="Gene3D" id="3.40.50.300">
    <property type="entry name" value="P-loop containing nucleotide triphosphate hydrolases"/>
    <property type="match status" value="1"/>
</dbReference>
<dbReference type="Gene3D" id="2.40.30.330">
    <property type="entry name" value="Pre-mRNA cleavage complex subunit Clp1, C-terminal domain"/>
    <property type="match status" value="1"/>
</dbReference>
<dbReference type="HAMAP" id="MF_03035">
    <property type="entry name" value="Clp1"/>
    <property type="match status" value="1"/>
</dbReference>
<dbReference type="InterPro" id="IPR028606">
    <property type="entry name" value="Clp1"/>
</dbReference>
<dbReference type="InterPro" id="IPR045116">
    <property type="entry name" value="Clp1/Grc3"/>
</dbReference>
<dbReference type="InterPro" id="IPR010655">
    <property type="entry name" value="Clp1_C"/>
</dbReference>
<dbReference type="InterPro" id="IPR038238">
    <property type="entry name" value="Clp1_C_sf"/>
</dbReference>
<dbReference type="InterPro" id="IPR032324">
    <property type="entry name" value="Clp1_N"/>
</dbReference>
<dbReference type="InterPro" id="IPR038239">
    <property type="entry name" value="Clp1_N_sf"/>
</dbReference>
<dbReference type="InterPro" id="IPR032319">
    <property type="entry name" value="CLP1_P"/>
</dbReference>
<dbReference type="InterPro" id="IPR027417">
    <property type="entry name" value="P-loop_NTPase"/>
</dbReference>
<dbReference type="PANTHER" id="PTHR12755">
    <property type="entry name" value="CLEAVAGE/POLYADENYLATION FACTOR IA SUBUNIT CLP1P"/>
    <property type="match status" value="1"/>
</dbReference>
<dbReference type="PANTHER" id="PTHR12755:SF6">
    <property type="entry name" value="POLYRIBONUCLEOTIDE 5'-HYDROXYL-KINASE CLP1"/>
    <property type="match status" value="1"/>
</dbReference>
<dbReference type="Pfam" id="PF06807">
    <property type="entry name" value="Clp1"/>
    <property type="match status" value="1"/>
</dbReference>
<dbReference type="Pfam" id="PF16573">
    <property type="entry name" value="CLP1_N"/>
    <property type="match status" value="1"/>
</dbReference>
<dbReference type="Pfam" id="PF16575">
    <property type="entry name" value="CLP1_P"/>
    <property type="match status" value="1"/>
</dbReference>
<dbReference type="SUPFAM" id="SSF52540">
    <property type="entry name" value="P-loop containing nucleoside triphosphate hydrolases"/>
    <property type="match status" value="2"/>
</dbReference>
<name>CLP1_ANOGA</name>
<accession>Q7QJW7</accession>
<organism>
    <name type="scientific">Anopheles gambiae</name>
    <name type="common">African malaria mosquito</name>
    <dbReference type="NCBI Taxonomy" id="7165"/>
    <lineage>
        <taxon>Eukaryota</taxon>
        <taxon>Metazoa</taxon>
        <taxon>Ecdysozoa</taxon>
        <taxon>Arthropoda</taxon>
        <taxon>Hexapoda</taxon>
        <taxon>Insecta</taxon>
        <taxon>Pterygota</taxon>
        <taxon>Neoptera</taxon>
        <taxon>Endopterygota</taxon>
        <taxon>Diptera</taxon>
        <taxon>Nematocera</taxon>
        <taxon>Culicoidea</taxon>
        <taxon>Culicidae</taxon>
        <taxon>Anophelinae</taxon>
        <taxon>Anopheles</taxon>
    </lineage>
</organism>
<comment type="function">
    <text evidence="1">Required for endonucleolytic cleavage during polyadenylation-dependent pre-mRNA 3'-end formation.</text>
</comment>
<comment type="subcellular location">
    <subcellularLocation>
        <location evidence="1">Nucleus</location>
    </subcellularLocation>
</comment>
<comment type="similarity">
    <text evidence="1">Belongs to the Clp1 family. Clp1 subfamily.</text>
</comment>
<gene>
    <name type="primary">cbc</name>
    <name type="ORF">AGAP007701</name>
</gene>
<keyword id="KW-0067">ATP-binding</keyword>
<keyword id="KW-0507">mRNA processing</keyword>
<keyword id="KW-0547">Nucleotide-binding</keyword>
<keyword id="KW-0539">Nucleus</keyword>
<keyword id="KW-1185">Reference proteome</keyword>
<evidence type="ECO:0000255" key="1">
    <source>
        <dbReference type="HAMAP-Rule" id="MF_03035"/>
    </source>
</evidence>
<reference key="1">
    <citation type="journal article" date="2002" name="Science">
        <title>The genome sequence of the malaria mosquito Anopheles gambiae.</title>
        <authorList>
            <person name="Holt R.A."/>
            <person name="Subramanian G.M."/>
            <person name="Halpern A."/>
            <person name="Sutton G.G."/>
            <person name="Charlab R."/>
            <person name="Nusskern D.R."/>
            <person name="Wincker P."/>
            <person name="Clark A.G."/>
            <person name="Ribeiro J.M.C."/>
            <person name="Wides R."/>
            <person name="Salzberg S.L."/>
            <person name="Loftus B.J."/>
            <person name="Yandell M.D."/>
            <person name="Majoros W.H."/>
            <person name="Rusch D.B."/>
            <person name="Lai Z."/>
            <person name="Kraft C.L."/>
            <person name="Abril J.F."/>
            <person name="Anthouard V."/>
            <person name="Arensburger P."/>
            <person name="Atkinson P.W."/>
            <person name="Baden H."/>
            <person name="de Berardinis V."/>
            <person name="Baldwin D."/>
            <person name="Benes V."/>
            <person name="Biedler J."/>
            <person name="Blass C."/>
            <person name="Bolanos R."/>
            <person name="Boscus D."/>
            <person name="Barnstead M."/>
            <person name="Cai S."/>
            <person name="Center A."/>
            <person name="Chaturverdi K."/>
            <person name="Christophides G.K."/>
            <person name="Chrystal M.A.M."/>
            <person name="Clamp M."/>
            <person name="Cravchik A."/>
            <person name="Curwen V."/>
            <person name="Dana A."/>
            <person name="Delcher A."/>
            <person name="Dew I."/>
            <person name="Evans C.A."/>
            <person name="Flanigan M."/>
            <person name="Grundschober-Freimoser A."/>
            <person name="Friedli L."/>
            <person name="Gu Z."/>
            <person name="Guan P."/>
            <person name="Guigo R."/>
            <person name="Hillenmeyer M.E."/>
            <person name="Hladun S.L."/>
            <person name="Hogan J.R."/>
            <person name="Hong Y.S."/>
            <person name="Hoover J."/>
            <person name="Jaillon O."/>
            <person name="Ke Z."/>
            <person name="Kodira C.D."/>
            <person name="Kokoza E."/>
            <person name="Koutsos A."/>
            <person name="Letunic I."/>
            <person name="Levitsky A.A."/>
            <person name="Liang Y."/>
            <person name="Lin J.-J."/>
            <person name="Lobo N.F."/>
            <person name="Lopez J.R."/>
            <person name="Malek J.A."/>
            <person name="McIntosh T.C."/>
            <person name="Meister S."/>
            <person name="Miller J.R."/>
            <person name="Mobarry C."/>
            <person name="Mongin E."/>
            <person name="Murphy S.D."/>
            <person name="O'Brochta D.A."/>
            <person name="Pfannkoch C."/>
            <person name="Qi R."/>
            <person name="Regier M.A."/>
            <person name="Remington K."/>
            <person name="Shao H."/>
            <person name="Sharakhova M.V."/>
            <person name="Sitter C.D."/>
            <person name="Shetty J."/>
            <person name="Smith T.J."/>
            <person name="Strong R."/>
            <person name="Sun J."/>
            <person name="Thomasova D."/>
            <person name="Ton L.Q."/>
            <person name="Topalis P."/>
            <person name="Tu Z.J."/>
            <person name="Unger M.F."/>
            <person name="Walenz B."/>
            <person name="Wang A.H."/>
            <person name="Wang J."/>
            <person name="Wang M."/>
            <person name="Wang X."/>
            <person name="Woodford K.J."/>
            <person name="Wortman J.R."/>
            <person name="Wu M."/>
            <person name="Yao A."/>
            <person name="Zdobnov E.M."/>
            <person name="Zhang H."/>
            <person name="Zhao Q."/>
            <person name="Zhao S."/>
            <person name="Zhu S.C."/>
            <person name="Zhimulev I."/>
            <person name="Coluzzi M."/>
            <person name="della Torre A."/>
            <person name="Roth C.W."/>
            <person name="Louis C."/>
            <person name="Kalush F."/>
            <person name="Mural R.J."/>
            <person name="Myers E.W."/>
            <person name="Adams M.D."/>
            <person name="Smith H.O."/>
            <person name="Broder S."/>
            <person name="Gardner M.J."/>
            <person name="Fraser C.M."/>
            <person name="Birney E."/>
            <person name="Bork P."/>
            <person name="Brey P.T."/>
            <person name="Venter J.C."/>
            <person name="Weissenbach J."/>
            <person name="Kafatos F.C."/>
            <person name="Collins F.H."/>
            <person name="Hoffman S.L."/>
        </authorList>
    </citation>
    <scope>NUCLEOTIDE SEQUENCE [LARGE SCALE GENOMIC DNA]</scope>
    <source>
        <strain>PEST</strain>
    </source>
</reference>
<feature type="chain" id="PRO_0000375175" description="Protein CLP1 homolog">
    <location>
        <begin position="1"/>
        <end position="423"/>
    </location>
</feature>
<feature type="binding site" evidence="1">
    <location>
        <position position="19"/>
    </location>
    <ligand>
        <name>ATP</name>
        <dbReference type="ChEBI" id="CHEBI:30616"/>
    </ligand>
</feature>
<feature type="binding site" evidence="1">
    <location>
        <position position="60"/>
    </location>
    <ligand>
        <name>ATP</name>
        <dbReference type="ChEBI" id="CHEBI:30616"/>
    </ligand>
</feature>
<feature type="binding site" evidence="1">
    <location>
        <begin position="122"/>
        <end position="127"/>
    </location>
    <ligand>
        <name>ATP</name>
        <dbReference type="ChEBI" id="CHEBI:30616"/>
    </ligand>
</feature>
<protein>
    <recommendedName>
        <fullName evidence="1">Protein CLP1 homolog</fullName>
    </recommendedName>
</protein>
<sequence length="423" mass="46846">MTDDKAVPRTDYKLESDSELRFEIENKNEKVTVVLLNGQAELFGTELVVKKPYEFVTGAKVAIFTYHGCTIELRGKPDVAYVAKETPMVMYLNANSALEHLRNKAEQEDAQGPIVMVVGPTDVGKTTLCRIFLNYAVRLGRRPIFVDLDVGQGGIAIPGTIGALLVERPAPVAEGFSQQAPLVYHYGHSTPSANSTFYDVLISKLAETTLERLQANKKAKSSGMIINTCGWVKGSGYSHILHTVEAFEVTAIFVLDQERLYNELLRDVKGTVQVVFLPKSGGVVERTKSQRTEARDQRIREYFYGSKMPLFPHSFDVKFSDIKIFKVGSPPLPDSCLPLGMKAEDNYTKLVAVQPGPQLLHHILAVSFAESTDENVIQTNVAGFICVTNVNMDKQVLTVLSPQPRPLPQTILLVSDLQFMDSH</sequence>